<organism>
    <name type="scientific">Vibrio vulnificus (strain YJ016)</name>
    <dbReference type="NCBI Taxonomy" id="196600"/>
    <lineage>
        <taxon>Bacteria</taxon>
        <taxon>Pseudomonadati</taxon>
        <taxon>Pseudomonadota</taxon>
        <taxon>Gammaproteobacteria</taxon>
        <taxon>Vibrionales</taxon>
        <taxon>Vibrionaceae</taxon>
        <taxon>Vibrio</taxon>
    </lineage>
</organism>
<keyword id="KW-0143">Chaperone</keyword>
<keyword id="KW-0963">Cytoplasm</keyword>
<keyword id="KW-0653">Protein transport</keyword>
<keyword id="KW-0811">Translocation</keyword>
<keyword id="KW-0813">Transport</keyword>
<protein>
    <recommendedName>
        <fullName evidence="1">Protein-export protein SecB</fullName>
    </recommendedName>
</protein>
<accession>Q7MGY8</accession>
<feature type="chain" id="PRO_0000055424" description="Protein-export protein SecB">
    <location>
        <begin position="1"/>
        <end position="155"/>
    </location>
</feature>
<reference key="1">
    <citation type="journal article" date="2003" name="Genome Res.">
        <title>Comparative genome analysis of Vibrio vulnificus, a marine pathogen.</title>
        <authorList>
            <person name="Chen C.-Y."/>
            <person name="Wu K.-M."/>
            <person name="Chang Y.-C."/>
            <person name="Chang C.-H."/>
            <person name="Tsai H.-C."/>
            <person name="Liao T.-L."/>
            <person name="Liu Y.-M."/>
            <person name="Chen H.-J."/>
            <person name="Shen A.B.-T."/>
            <person name="Li J.-C."/>
            <person name="Su T.-L."/>
            <person name="Shao C.-P."/>
            <person name="Lee C.-T."/>
            <person name="Hor L.-I."/>
            <person name="Tsai S.-F."/>
        </authorList>
    </citation>
    <scope>NUCLEOTIDE SEQUENCE [LARGE SCALE GENOMIC DNA]</scope>
    <source>
        <strain>YJ016</strain>
    </source>
</reference>
<dbReference type="EMBL" id="BA000037">
    <property type="protein sequence ID" value="BAC95850.1"/>
    <property type="molecule type" value="Genomic_DNA"/>
</dbReference>
<dbReference type="RefSeq" id="WP_011079263.1">
    <property type="nucleotide sequence ID" value="NC_005139.1"/>
</dbReference>
<dbReference type="SMR" id="Q7MGY8"/>
<dbReference type="STRING" id="672.VV93_v1c28120"/>
<dbReference type="GeneID" id="93895544"/>
<dbReference type="KEGG" id="vvy:VV3085"/>
<dbReference type="eggNOG" id="COG1952">
    <property type="taxonomic scope" value="Bacteria"/>
</dbReference>
<dbReference type="HOGENOM" id="CLU_111574_1_0_6"/>
<dbReference type="Proteomes" id="UP000002675">
    <property type="component" value="Chromosome I"/>
</dbReference>
<dbReference type="GO" id="GO:0005737">
    <property type="term" value="C:cytoplasm"/>
    <property type="evidence" value="ECO:0007669"/>
    <property type="project" value="UniProtKB-SubCell"/>
</dbReference>
<dbReference type="GO" id="GO:0051082">
    <property type="term" value="F:unfolded protein binding"/>
    <property type="evidence" value="ECO:0007669"/>
    <property type="project" value="InterPro"/>
</dbReference>
<dbReference type="GO" id="GO:0006457">
    <property type="term" value="P:protein folding"/>
    <property type="evidence" value="ECO:0007669"/>
    <property type="project" value="UniProtKB-UniRule"/>
</dbReference>
<dbReference type="GO" id="GO:0051262">
    <property type="term" value="P:protein tetramerization"/>
    <property type="evidence" value="ECO:0007669"/>
    <property type="project" value="InterPro"/>
</dbReference>
<dbReference type="GO" id="GO:0015031">
    <property type="term" value="P:protein transport"/>
    <property type="evidence" value="ECO:0007669"/>
    <property type="project" value="UniProtKB-UniRule"/>
</dbReference>
<dbReference type="Gene3D" id="3.10.420.10">
    <property type="entry name" value="SecB-like"/>
    <property type="match status" value="1"/>
</dbReference>
<dbReference type="HAMAP" id="MF_00821">
    <property type="entry name" value="SecB"/>
    <property type="match status" value="1"/>
</dbReference>
<dbReference type="InterPro" id="IPR003708">
    <property type="entry name" value="SecB"/>
</dbReference>
<dbReference type="InterPro" id="IPR035958">
    <property type="entry name" value="SecB-like_sf"/>
</dbReference>
<dbReference type="NCBIfam" id="NF004393">
    <property type="entry name" value="PRK05751.1-4"/>
    <property type="match status" value="1"/>
</dbReference>
<dbReference type="NCBIfam" id="TIGR00809">
    <property type="entry name" value="secB"/>
    <property type="match status" value="1"/>
</dbReference>
<dbReference type="PANTHER" id="PTHR36918">
    <property type="match status" value="1"/>
</dbReference>
<dbReference type="PANTHER" id="PTHR36918:SF1">
    <property type="entry name" value="PROTEIN-EXPORT PROTEIN SECB"/>
    <property type="match status" value="1"/>
</dbReference>
<dbReference type="Pfam" id="PF02556">
    <property type="entry name" value="SecB"/>
    <property type="match status" value="1"/>
</dbReference>
<dbReference type="PRINTS" id="PR01594">
    <property type="entry name" value="SECBCHAPRONE"/>
</dbReference>
<dbReference type="SUPFAM" id="SSF54611">
    <property type="entry name" value="SecB-like"/>
    <property type="match status" value="1"/>
</dbReference>
<sequence length="155" mass="17257">MAEAAPQDTQQHFAIQRIFLKDVSFEAPNSPVMFQKEWNPDVKLDLDTQSRELGEGVYEVILRLTVTVKNAEETAFLCEVQQGGIFTAEKMEAGQLAHCLGAFCPNILFPYARETISSLVVKGTFPQLNLAPVNFDALFMNYLQQQAAQQGAEQA</sequence>
<evidence type="ECO:0000255" key="1">
    <source>
        <dbReference type="HAMAP-Rule" id="MF_00821"/>
    </source>
</evidence>
<proteinExistence type="inferred from homology"/>
<name>SECB_VIBVY</name>
<gene>
    <name evidence="1" type="primary">secB</name>
    <name type="ordered locus">VV3085</name>
</gene>
<comment type="function">
    <text evidence="1">One of the proteins required for the normal export of preproteins out of the cell cytoplasm. It is a molecular chaperone that binds to a subset of precursor proteins, maintaining them in a translocation-competent state. It also specifically binds to its receptor SecA.</text>
</comment>
<comment type="subunit">
    <text evidence="1">Homotetramer, a dimer of dimers. One homotetramer interacts with 1 SecA dimer.</text>
</comment>
<comment type="subcellular location">
    <subcellularLocation>
        <location evidence="1">Cytoplasm</location>
    </subcellularLocation>
</comment>
<comment type="similarity">
    <text evidence="1">Belongs to the SecB family.</text>
</comment>